<organism>
    <name type="scientific">Halorhodospira halophila (strain DSM 244 / SL1)</name>
    <name type="common">Ectothiorhodospira halophila (strain DSM 244 / SL1)</name>
    <dbReference type="NCBI Taxonomy" id="349124"/>
    <lineage>
        <taxon>Bacteria</taxon>
        <taxon>Pseudomonadati</taxon>
        <taxon>Pseudomonadota</taxon>
        <taxon>Gammaproteobacteria</taxon>
        <taxon>Chromatiales</taxon>
        <taxon>Ectothiorhodospiraceae</taxon>
        <taxon>Halorhodospira</taxon>
    </lineage>
</organism>
<protein>
    <recommendedName>
        <fullName evidence="1">Cysteine--tRNA ligase</fullName>
        <ecNumber evidence="1">6.1.1.16</ecNumber>
    </recommendedName>
    <alternativeName>
        <fullName evidence="1">Cysteinyl-tRNA synthetase</fullName>
        <shortName evidence="1">CysRS</shortName>
    </alternativeName>
</protein>
<sequence length="459" mass="51287">MLKIHNSLTGAKEPFQPIEPGQVRIYVCGMTVYDFCHLGHARALVVFDAVVRYLRWLGYEVTYVRNITDIDDKIIRRAAENGEPMTALTDRFIRAMHEDCSALGVEPPDHEPRATERLESMIALIEELIAGGHAYVGDNGDVYFSVASFPEYGKLSGRRVEELRSGSRIEPDEAKHDPVDFVLWKAAKSGEPAWPSPWGDGRPGWHIECSAMSRDLLGSHFDIHGGGVDLQFPHHENEIAQSECASGHRFVNYWMHNGHVRIDDEKMAKSLGNFFTVRDVLAEHPAEVVRLFLLSSHYRSPLNYTGDALDEARGGLERLYNALRGLPAAAPARSQARERFREAMDDDFNTREALAVLFDGAREINRLREAGDASGAASAAAELRELGAVLGLLQQDPEAYLRGDVADAEAEEIESLVAQRTAARKAKDFAEADRIRDELQARGIELEDTPEGTKWRRTR</sequence>
<keyword id="KW-0030">Aminoacyl-tRNA synthetase</keyword>
<keyword id="KW-0067">ATP-binding</keyword>
<keyword id="KW-0963">Cytoplasm</keyword>
<keyword id="KW-0436">Ligase</keyword>
<keyword id="KW-0479">Metal-binding</keyword>
<keyword id="KW-0547">Nucleotide-binding</keyword>
<keyword id="KW-0648">Protein biosynthesis</keyword>
<keyword id="KW-1185">Reference proteome</keyword>
<keyword id="KW-0862">Zinc</keyword>
<accession>A1WT89</accession>
<proteinExistence type="inferred from homology"/>
<comment type="catalytic activity">
    <reaction evidence="1">
        <text>tRNA(Cys) + L-cysteine + ATP = L-cysteinyl-tRNA(Cys) + AMP + diphosphate</text>
        <dbReference type="Rhea" id="RHEA:17773"/>
        <dbReference type="Rhea" id="RHEA-COMP:9661"/>
        <dbReference type="Rhea" id="RHEA-COMP:9679"/>
        <dbReference type="ChEBI" id="CHEBI:30616"/>
        <dbReference type="ChEBI" id="CHEBI:33019"/>
        <dbReference type="ChEBI" id="CHEBI:35235"/>
        <dbReference type="ChEBI" id="CHEBI:78442"/>
        <dbReference type="ChEBI" id="CHEBI:78517"/>
        <dbReference type="ChEBI" id="CHEBI:456215"/>
        <dbReference type="EC" id="6.1.1.16"/>
    </reaction>
</comment>
<comment type="cofactor">
    <cofactor evidence="1">
        <name>Zn(2+)</name>
        <dbReference type="ChEBI" id="CHEBI:29105"/>
    </cofactor>
    <text evidence="1">Binds 1 zinc ion per subunit.</text>
</comment>
<comment type="subunit">
    <text evidence="1">Monomer.</text>
</comment>
<comment type="subcellular location">
    <subcellularLocation>
        <location evidence="1">Cytoplasm</location>
    </subcellularLocation>
</comment>
<comment type="similarity">
    <text evidence="1">Belongs to the class-I aminoacyl-tRNA synthetase family.</text>
</comment>
<name>SYC_HALHL</name>
<feature type="chain" id="PRO_0000332835" description="Cysteine--tRNA ligase">
    <location>
        <begin position="1"/>
        <end position="459"/>
    </location>
</feature>
<feature type="region of interest" description="Disordered" evidence="2">
    <location>
        <begin position="440"/>
        <end position="459"/>
    </location>
</feature>
<feature type="short sequence motif" description="'HIGH' region">
    <location>
        <begin position="30"/>
        <end position="40"/>
    </location>
</feature>
<feature type="short sequence motif" description="'KMSKS' region">
    <location>
        <begin position="266"/>
        <end position="270"/>
    </location>
</feature>
<feature type="binding site" evidence="1">
    <location>
        <position position="28"/>
    </location>
    <ligand>
        <name>Zn(2+)</name>
        <dbReference type="ChEBI" id="CHEBI:29105"/>
    </ligand>
</feature>
<feature type="binding site" evidence="1">
    <location>
        <position position="209"/>
    </location>
    <ligand>
        <name>Zn(2+)</name>
        <dbReference type="ChEBI" id="CHEBI:29105"/>
    </ligand>
</feature>
<feature type="binding site" evidence="1">
    <location>
        <position position="234"/>
    </location>
    <ligand>
        <name>Zn(2+)</name>
        <dbReference type="ChEBI" id="CHEBI:29105"/>
    </ligand>
</feature>
<feature type="binding site" evidence="1">
    <location>
        <position position="238"/>
    </location>
    <ligand>
        <name>Zn(2+)</name>
        <dbReference type="ChEBI" id="CHEBI:29105"/>
    </ligand>
</feature>
<feature type="binding site" evidence="1">
    <location>
        <position position="269"/>
    </location>
    <ligand>
        <name>ATP</name>
        <dbReference type="ChEBI" id="CHEBI:30616"/>
    </ligand>
</feature>
<reference key="1">
    <citation type="submission" date="2006-12" db="EMBL/GenBank/DDBJ databases">
        <title>Complete sequence of Halorhodospira halophila SL1.</title>
        <authorList>
            <consortium name="US DOE Joint Genome Institute"/>
            <person name="Copeland A."/>
            <person name="Lucas S."/>
            <person name="Lapidus A."/>
            <person name="Barry K."/>
            <person name="Detter J.C."/>
            <person name="Glavina del Rio T."/>
            <person name="Hammon N."/>
            <person name="Israni S."/>
            <person name="Dalin E."/>
            <person name="Tice H."/>
            <person name="Pitluck S."/>
            <person name="Saunders E."/>
            <person name="Brettin T."/>
            <person name="Bruce D."/>
            <person name="Han C."/>
            <person name="Tapia R."/>
            <person name="Schmutz J."/>
            <person name="Larimer F."/>
            <person name="Land M."/>
            <person name="Hauser L."/>
            <person name="Kyrpides N."/>
            <person name="Mikhailova N."/>
            <person name="Hoff W."/>
            <person name="Richardson P."/>
        </authorList>
    </citation>
    <scope>NUCLEOTIDE SEQUENCE [LARGE SCALE GENOMIC DNA]</scope>
    <source>
        <strain>DSM 244 / SL1</strain>
    </source>
</reference>
<dbReference type="EC" id="6.1.1.16" evidence="1"/>
<dbReference type="EMBL" id="CP000544">
    <property type="protein sequence ID" value="ABM60901.1"/>
    <property type="molecule type" value="Genomic_DNA"/>
</dbReference>
<dbReference type="RefSeq" id="WP_011812924.1">
    <property type="nucleotide sequence ID" value="NC_008789.1"/>
</dbReference>
<dbReference type="SMR" id="A1WT89"/>
<dbReference type="STRING" id="349124.Hhal_0107"/>
<dbReference type="KEGG" id="hha:Hhal_0107"/>
<dbReference type="eggNOG" id="COG0215">
    <property type="taxonomic scope" value="Bacteria"/>
</dbReference>
<dbReference type="HOGENOM" id="CLU_013528_0_1_6"/>
<dbReference type="OrthoDB" id="9815130at2"/>
<dbReference type="Proteomes" id="UP000000647">
    <property type="component" value="Chromosome"/>
</dbReference>
<dbReference type="GO" id="GO:0005829">
    <property type="term" value="C:cytosol"/>
    <property type="evidence" value="ECO:0007669"/>
    <property type="project" value="TreeGrafter"/>
</dbReference>
<dbReference type="GO" id="GO:0005524">
    <property type="term" value="F:ATP binding"/>
    <property type="evidence" value="ECO:0007669"/>
    <property type="project" value="UniProtKB-UniRule"/>
</dbReference>
<dbReference type="GO" id="GO:0004817">
    <property type="term" value="F:cysteine-tRNA ligase activity"/>
    <property type="evidence" value="ECO:0007669"/>
    <property type="project" value="UniProtKB-UniRule"/>
</dbReference>
<dbReference type="GO" id="GO:0008270">
    <property type="term" value="F:zinc ion binding"/>
    <property type="evidence" value="ECO:0007669"/>
    <property type="project" value="UniProtKB-UniRule"/>
</dbReference>
<dbReference type="GO" id="GO:0006423">
    <property type="term" value="P:cysteinyl-tRNA aminoacylation"/>
    <property type="evidence" value="ECO:0007669"/>
    <property type="project" value="UniProtKB-UniRule"/>
</dbReference>
<dbReference type="CDD" id="cd07963">
    <property type="entry name" value="Anticodon_Ia_Cys"/>
    <property type="match status" value="1"/>
</dbReference>
<dbReference type="CDD" id="cd00672">
    <property type="entry name" value="CysRS_core"/>
    <property type="match status" value="1"/>
</dbReference>
<dbReference type="FunFam" id="3.40.50.620:FF:000009">
    <property type="entry name" value="Cysteine--tRNA ligase"/>
    <property type="match status" value="1"/>
</dbReference>
<dbReference type="Gene3D" id="1.20.120.1910">
    <property type="entry name" value="Cysteine-tRNA ligase, C-terminal anti-codon recognition domain"/>
    <property type="match status" value="1"/>
</dbReference>
<dbReference type="Gene3D" id="3.40.50.620">
    <property type="entry name" value="HUPs"/>
    <property type="match status" value="1"/>
</dbReference>
<dbReference type="HAMAP" id="MF_00041">
    <property type="entry name" value="Cys_tRNA_synth"/>
    <property type="match status" value="1"/>
</dbReference>
<dbReference type="InterPro" id="IPR015803">
    <property type="entry name" value="Cys-tRNA-ligase"/>
</dbReference>
<dbReference type="InterPro" id="IPR015273">
    <property type="entry name" value="Cys-tRNA-synt_Ia_DALR"/>
</dbReference>
<dbReference type="InterPro" id="IPR024909">
    <property type="entry name" value="Cys-tRNA/MSH_ligase"/>
</dbReference>
<dbReference type="InterPro" id="IPR056411">
    <property type="entry name" value="CysS_C"/>
</dbReference>
<dbReference type="InterPro" id="IPR014729">
    <property type="entry name" value="Rossmann-like_a/b/a_fold"/>
</dbReference>
<dbReference type="InterPro" id="IPR032678">
    <property type="entry name" value="tRNA-synt_1_cat_dom"/>
</dbReference>
<dbReference type="InterPro" id="IPR009080">
    <property type="entry name" value="tRNAsynth_Ia_anticodon-bd"/>
</dbReference>
<dbReference type="NCBIfam" id="TIGR00435">
    <property type="entry name" value="cysS"/>
    <property type="match status" value="1"/>
</dbReference>
<dbReference type="PANTHER" id="PTHR10890:SF3">
    <property type="entry name" value="CYSTEINE--TRNA LIGASE, CYTOPLASMIC"/>
    <property type="match status" value="1"/>
</dbReference>
<dbReference type="PANTHER" id="PTHR10890">
    <property type="entry name" value="CYSTEINYL-TRNA SYNTHETASE"/>
    <property type="match status" value="1"/>
</dbReference>
<dbReference type="Pfam" id="PF23493">
    <property type="entry name" value="CysS_C"/>
    <property type="match status" value="1"/>
</dbReference>
<dbReference type="Pfam" id="PF09190">
    <property type="entry name" value="DALR_2"/>
    <property type="match status" value="1"/>
</dbReference>
<dbReference type="Pfam" id="PF01406">
    <property type="entry name" value="tRNA-synt_1e"/>
    <property type="match status" value="1"/>
</dbReference>
<dbReference type="PRINTS" id="PR00983">
    <property type="entry name" value="TRNASYNTHCYS"/>
</dbReference>
<dbReference type="SMART" id="SM00840">
    <property type="entry name" value="DALR_2"/>
    <property type="match status" value="1"/>
</dbReference>
<dbReference type="SUPFAM" id="SSF47323">
    <property type="entry name" value="Anticodon-binding domain of a subclass of class I aminoacyl-tRNA synthetases"/>
    <property type="match status" value="1"/>
</dbReference>
<dbReference type="SUPFAM" id="SSF52374">
    <property type="entry name" value="Nucleotidylyl transferase"/>
    <property type="match status" value="1"/>
</dbReference>
<gene>
    <name evidence="1" type="primary">cysS</name>
    <name type="ordered locus">Hhal_0107</name>
</gene>
<evidence type="ECO:0000255" key="1">
    <source>
        <dbReference type="HAMAP-Rule" id="MF_00041"/>
    </source>
</evidence>
<evidence type="ECO:0000256" key="2">
    <source>
        <dbReference type="SAM" id="MobiDB-lite"/>
    </source>
</evidence>